<sequence>MANIDLSQYGITGTTGILHNPSYKTLFEEETKEGLTGYEQGQVSELGAVNVKTGIFTGRSPKDKFIVDDETSHDTVWWDSEDYHNDNHRATPETWNALKEIAKKELSNKKLYVVDAFCGANKDTRMAVRFIVEVAWQAHFVTNMFIQPTEEELANFKPDFVVYNASKAKVENYKELGLHSETAVVFNLTSREQVIINTWYGGEMKKGMFSMMNYFLPLKGIAAMHCSANTDKQGQNTAIFFGLSGTGKTTLSTDPKRLLIGDDEHGWDDEGVFNFEGGCYAKVINLDMESEPDIYGAIKRNALLENVTLDDKGNIDFADKTITENTRVSYPIDHIKGTVKGFVNDKSAAPAAKSVIFLSADAFGVLPPVSILTPEQTKYYFLSGFTAKLAGTERGITEPTPTFSACFGQAFLELHPTKYAEELVKKMEANGTKAYLVNTGWNGSGKRISIKDTRGIIDAIHSGAIKKAPTKKIPFFNLEVPTELEGVDTNILDPKDTYANPADWEAKAKDLAQRFIKNFDKYTKNNEAGKALVAAGPQL</sequence>
<protein>
    <recommendedName>
        <fullName evidence="1">Phosphoenolpyruvate carboxykinase (ATP)</fullName>
        <shortName evidence="1">PCK</shortName>
        <shortName evidence="1">PEP carboxykinase</shortName>
        <shortName evidence="1">PEPCK</shortName>
        <ecNumber evidence="1">4.1.1.49</ecNumber>
    </recommendedName>
</protein>
<feature type="chain" id="PRO_0000203841" description="Phosphoenolpyruvate carboxykinase (ATP)">
    <location>
        <begin position="1"/>
        <end position="539"/>
    </location>
</feature>
<feature type="binding site" evidence="1">
    <location>
        <position position="59"/>
    </location>
    <ligand>
        <name>substrate</name>
    </ligand>
</feature>
<feature type="binding site" evidence="1">
    <location>
        <position position="200"/>
    </location>
    <ligand>
        <name>substrate</name>
    </ligand>
</feature>
<feature type="binding site" evidence="1">
    <location>
        <position position="206"/>
    </location>
    <ligand>
        <name>ATP</name>
        <dbReference type="ChEBI" id="CHEBI:30616"/>
    </ligand>
</feature>
<feature type="binding site" evidence="1">
    <location>
        <position position="206"/>
    </location>
    <ligand>
        <name>Mn(2+)</name>
        <dbReference type="ChEBI" id="CHEBI:29035"/>
    </ligand>
</feature>
<feature type="binding site" evidence="1">
    <location>
        <position position="206"/>
    </location>
    <ligand>
        <name>substrate</name>
    </ligand>
</feature>
<feature type="binding site" evidence="1">
    <location>
        <position position="225"/>
    </location>
    <ligand>
        <name>ATP</name>
        <dbReference type="ChEBI" id="CHEBI:30616"/>
    </ligand>
</feature>
<feature type="binding site" evidence="1">
    <location>
        <position position="225"/>
    </location>
    <ligand>
        <name>Mn(2+)</name>
        <dbReference type="ChEBI" id="CHEBI:29035"/>
    </ligand>
</feature>
<feature type="binding site" evidence="1">
    <location>
        <begin position="242"/>
        <end position="250"/>
    </location>
    <ligand>
        <name>ATP</name>
        <dbReference type="ChEBI" id="CHEBI:30616"/>
    </ligand>
</feature>
<feature type="binding site" evidence="1">
    <location>
        <position position="263"/>
    </location>
    <ligand>
        <name>Mn(2+)</name>
        <dbReference type="ChEBI" id="CHEBI:29035"/>
    </ligand>
</feature>
<feature type="binding site" evidence="1">
    <location>
        <position position="291"/>
    </location>
    <ligand>
        <name>ATP</name>
        <dbReference type="ChEBI" id="CHEBI:30616"/>
    </ligand>
</feature>
<feature type="binding site" evidence="1">
    <location>
        <position position="327"/>
    </location>
    <ligand>
        <name>ATP</name>
        <dbReference type="ChEBI" id="CHEBI:30616"/>
    </ligand>
</feature>
<feature type="binding site" evidence="1">
    <location>
        <position position="327"/>
    </location>
    <ligand>
        <name>substrate</name>
    </ligand>
</feature>
<feature type="binding site" evidence="1">
    <location>
        <begin position="447"/>
        <end position="448"/>
    </location>
    <ligand>
        <name>ATP</name>
        <dbReference type="ChEBI" id="CHEBI:30616"/>
    </ligand>
</feature>
<feature type="binding site" evidence="1">
    <location>
        <position position="453"/>
    </location>
    <ligand>
        <name>ATP</name>
        <dbReference type="ChEBI" id="CHEBI:30616"/>
    </ligand>
</feature>
<keyword id="KW-0067">ATP-binding</keyword>
<keyword id="KW-0963">Cytoplasm</keyword>
<keyword id="KW-0210">Decarboxylase</keyword>
<keyword id="KW-0312">Gluconeogenesis</keyword>
<keyword id="KW-0456">Lyase</keyword>
<keyword id="KW-0464">Manganese</keyword>
<keyword id="KW-0479">Metal-binding</keyword>
<keyword id="KW-0547">Nucleotide-binding</keyword>
<accession>O83023</accession>
<comment type="function">
    <text evidence="1">Involved in the gluconeogenesis. Catalyzes the conversion of oxaloacetate (OAA) to phosphoenolpyruvate (PEP) through direct phosphoryl transfer between the nucleoside triphosphate and OAA.</text>
</comment>
<comment type="catalytic activity">
    <reaction evidence="1">
        <text>oxaloacetate + ATP = phosphoenolpyruvate + ADP + CO2</text>
        <dbReference type="Rhea" id="RHEA:18617"/>
        <dbReference type="ChEBI" id="CHEBI:16452"/>
        <dbReference type="ChEBI" id="CHEBI:16526"/>
        <dbReference type="ChEBI" id="CHEBI:30616"/>
        <dbReference type="ChEBI" id="CHEBI:58702"/>
        <dbReference type="ChEBI" id="CHEBI:456216"/>
        <dbReference type="EC" id="4.1.1.49"/>
    </reaction>
</comment>
<comment type="cofactor">
    <cofactor evidence="1">
        <name>Mn(2+)</name>
        <dbReference type="ChEBI" id="CHEBI:29035"/>
    </cofactor>
    <text evidence="1">Binds 1 Mn(2+) ion per subunit.</text>
</comment>
<comment type="pathway">
    <text evidence="1">Carbohydrate biosynthesis; gluconeogenesis.</text>
</comment>
<comment type="subcellular location">
    <subcellularLocation>
        <location evidence="1">Cytoplasm</location>
    </subcellularLocation>
</comment>
<comment type="similarity">
    <text evidence="1">Belongs to the phosphoenolpyruvate carboxykinase (ATP) family.</text>
</comment>
<gene>
    <name evidence="1" type="primary">pckA</name>
    <name type="synonym">pck</name>
</gene>
<reference key="1">
    <citation type="submission" date="1998-07" db="EMBL/GenBank/DDBJ databases">
        <title>Nucleotide sequence and expression of the gene encoding phosphoenolpyruvate carboxykinase of a ruminal bacterium, Selenomonas ruminantium subsp. lactilytica.</title>
        <authorList>
            <person name="Asanuma N."/>
            <person name="Iwamoto M."/>
            <person name="Hino T."/>
        </authorList>
    </citation>
    <scope>NUCLEOTIDE SEQUENCE [GENOMIC DNA]</scope>
    <source>
        <strain>Subsp. lactilytica / TH1</strain>
    </source>
</reference>
<proteinExistence type="inferred from homology"/>
<organism>
    <name type="scientific">Selenomonas ruminantium</name>
    <dbReference type="NCBI Taxonomy" id="971"/>
    <lineage>
        <taxon>Bacteria</taxon>
        <taxon>Bacillati</taxon>
        <taxon>Bacillota</taxon>
        <taxon>Negativicutes</taxon>
        <taxon>Selenomonadales</taxon>
        <taxon>Selenomonadaceae</taxon>
        <taxon>Selenomonas</taxon>
    </lineage>
</organism>
<name>PCKA_SELRU</name>
<evidence type="ECO:0000255" key="1">
    <source>
        <dbReference type="HAMAP-Rule" id="MF_00453"/>
    </source>
</evidence>
<dbReference type="EC" id="4.1.1.49" evidence="1"/>
<dbReference type="EMBL" id="AB016600">
    <property type="protein sequence ID" value="BAA32061.1"/>
    <property type="molecule type" value="Genomic_DNA"/>
</dbReference>
<dbReference type="SMR" id="O83023"/>
<dbReference type="STRING" id="971.SAMN02910356_00092"/>
<dbReference type="BRENDA" id="4.1.1.49">
    <property type="organism ID" value="5668"/>
</dbReference>
<dbReference type="UniPathway" id="UPA00138"/>
<dbReference type="GO" id="GO:0005829">
    <property type="term" value="C:cytosol"/>
    <property type="evidence" value="ECO:0007669"/>
    <property type="project" value="TreeGrafter"/>
</dbReference>
<dbReference type="GO" id="GO:0005524">
    <property type="term" value="F:ATP binding"/>
    <property type="evidence" value="ECO:0007669"/>
    <property type="project" value="UniProtKB-UniRule"/>
</dbReference>
<dbReference type="GO" id="GO:0046872">
    <property type="term" value="F:metal ion binding"/>
    <property type="evidence" value="ECO:0007669"/>
    <property type="project" value="UniProtKB-KW"/>
</dbReference>
<dbReference type="GO" id="GO:0004612">
    <property type="term" value="F:phosphoenolpyruvate carboxykinase (ATP) activity"/>
    <property type="evidence" value="ECO:0007669"/>
    <property type="project" value="UniProtKB-UniRule"/>
</dbReference>
<dbReference type="GO" id="GO:0006094">
    <property type="term" value="P:gluconeogenesis"/>
    <property type="evidence" value="ECO:0007669"/>
    <property type="project" value="UniProtKB-UniRule"/>
</dbReference>
<dbReference type="CDD" id="cd00484">
    <property type="entry name" value="PEPCK_ATP"/>
    <property type="match status" value="1"/>
</dbReference>
<dbReference type="FunFam" id="3.40.449.10:FF:000001">
    <property type="entry name" value="Phosphoenolpyruvate carboxykinase (ATP)"/>
    <property type="match status" value="1"/>
</dbReference>
<dbReference type="Gene3D" id="3.90.228.20">
    <property type="match status" value="1"/>
</dbReference>
<dbReference type="Gene3D" id="3.40.449.10">
    <property type="entry name" value="Phosphoenolpyruvate Carboxykinase, domain 1"/>
    <property type="match status" value="1"/>
</dbReference>
<dbReference type="Gene3D" id="2.170.8.10">
    <property type="entry name" value="Phosphoenolpyruvate Carboxykinase, domain 2"/>
    <property type="match status" value="1"/>
</dbReference>
<dbReference type="HAMAP" id="MF_00453">
    <property type="entry name" value="PEPCK_ATP"/>
    <property type="match status" value="1"/>
</dbReference>
<dbReference type="InterPro" id="IPR001272">
    <property type="entry name" value="PEP_carboxykinase_ATP"/>
</dbReference>
<dbReference type="InterPro" id="IPR013035">
    <property type="entry name" value="PEP_carboxykinase_C"/>
</dbReference>
<dbReference type="InterPro" id="IPR008210">
    <property type="entry name" value="PEP_carboxykinase_N"/>
</dbReference>
<dbReference type="InterPro" id="IPR015994">
    <property type="entry name" value="PEPCK_ATP_CS"/>
</dbReference>
<dbReference type="NCBIfam" id="TIGR00224">
    <property type="entry name" value="pckA"/>
    <property type="match status" value="1"/>
</dbReference>
<dbReference type="NCBIfam" id="NF006819">
    <property type="entry name" value="PRK09344.1-1"/>
    <property type="match status" value="1"/>
</dbReference>
<dbReference type="NCBIfam" id="NF006820">
    <property type="entry name" value="PRK09344.1-2"/>
    <property type="match status" value="1"/>
</dbReference>
<dbReference type="NCBIfam" id="NF006821">
    <property type="entry name" value="PRK09344.1-3"/>
    <property type="match status" value="1"/>
</dbReference>
<dbReference type="PANTHER" id="PTHR30031:SF0">
    <property type="entry name" value="PHOSPHOENOLPYRUVATE CARBOXYKINASE (ATP)"/>
    <property type="match status" value="1"/>
</dbReference>
<dbReference type="PANTHER" id="PTHR30031">
    <property type="entry name" value="PHOSPHOENOLPYRUVATE CARBOXYKINASE ATP"/>
    <property type="match status" value="1"/>
</dbReference>
<dbReference type="Pfam" id="PF01293">
    <property type="entry name" value="PEPCK_ATP"/>
    <property type="match status" value="1"/>
</dbReference>
<dbReference type="PIRSF" id="PIRSF006294">
    <property type="entry name" value="PEP_crbxkin"/>
    <property type="match status" value="1"/>
</dbReference>
<dbReference type="SUPFAM" id="SSF68923">
    <property type="entry name" value="PEP carboxykinase N-terminal domain"/>
    <property type="match status" value="1"/>
</dbReference>
<dbReference type="SUPFAM" id="SSF53795">
    <property type="entry name" value="PEP carboxykinase-like"/>
    <property type="match status" value="1"/>
</dbReference>
<dbReference type="PROSITE" id="PS00532">
    <property type="entry name" value="PEPCK_ATP"/>
    <property type="match status" value="1"/>
</dbReference>